<comment type="similarity">
    <text evidence="1">Belongs to the bacterial ribosomal protein bL34 family.</text>
</comment>
<organism>
    <name type="scientific">Anaeromyxobacter dehalogenans (strain 2CP-C)</name>
    <dbReference type="NCBI Taxonomy" id="290397"/>
    <lineage>
        <taxon>Bacteria</taxon>
        <taxon>Pseudomonadati</taxon>
        <taxon>Myxococcota</taxon>
        <taxon>Myxococcia</taxon>
        <taxon>Myxococcales</taxon>
        <taxon>Cystobacterineae</taxon>
        <taxon>Anaeromyxobacteraceae</taxon>
        <taxon>Anaeromyxobacter</taxon>
    </lineage>
</organism>
<sequence>MKRTYQPKKQRRNRTHGFLKRSKTPGGRNVLKSRRAKGRKRLTTRAPKK</sequence>
<dbReference type="EMBL" id="CP000251">
    <property type="protein sequence ID" value="ABC84124.1"/>
    <property type="molecule type" value="Genomic_DNA"/>
</dbReference>
<dbReference type="SMR" id="Q2IHR4"/>
<dbReference type="STRING" id="290397.Adeh_4361"/>
<dbReference type="KEGG" id="ade:Adeh_4361"/>
<dbReference type="eggNOG" id="COG0230">
    <property type="taxonomic scope" value="Bacteria"/>
</dbReference>
<dbReference type="HOGENOM" id="CLU_129938_2_0_7"/>
<dbReference type="OrthoDB" id="9804164at2"/>
<dbReference type="Proteomes" id="UP000001935">
    <property type="component" value="Chromosome"/>
</dbReference>
<dbReference type="GO" id="GO:1990904">
    <property type="term" value="C:ribonucleoprotein complex"/>
    <property type="evidence" value="ECO:0007669"/>
    <property type="project" value="UniProtKB-KW"/>
</dbReference>
<dbReference type="GO" id="GO:0005840">
    <property type="term" value="C:ribosome"/>
    <property type="evidence" value="ECO:0007669"/>
    <property type="project" value="UniProtKB-KW"/>
</dbReference>
<dbReference type="GO" id="GO:0003735">
    <property type="term" value="F:structural constituent of ribosome"/>
    <property type="evidence" value="ECO:0007669"/>
    <property type="project" value="InterPro"/>
</dbReference>
<dbReference type="GO" id="GO:0006412">
    <property type="term" value="P:translation"/>
    <property type="evidence" value="ECO:0007669"/>
    <property type="project" value="UniProtKB-UniRule"/>
</dbReference>
<dbReference type="FunFam" id="1.10.287.3980:FF:000001">
    <property type="entry name" value="Mitochondrial ribosomal protein L34"/>
    <property type="match status" value="1"/>
</dbReference>
<dbReference type="Gene3D" id="1.10.287.3980">
    <property type="match status" value="1"/>
</dbReference>
<dbReference type="HAMAP" id="MF_00391">
    <property type="entry name" value="Ribosomal_bL34"/>
    <property type="match status" value="1"/>
</dbReference>
<dbReference type="InterPro" id="IPR000271">
    <property type="entry name" value="Ribosomal_bL34"/>
</dbReference>
<dbReference type="InterPro" id="IPR020939">
    <property type="entry name" value="Ribosomal_bL34_CS"/>
</dbReference>
<dbReference type="NCBIfam" id="TIGR01030">
    <property type="entry name" value="rpmH_bact"/>
    <property type="match status" value="1"/>
</dbReference>
<dbReference type="PANTHER" id="PTHR14503:SF4">
    <property type="entry name" value="LARGE RIBOSOMAL SUBUNIT PROTEIN BL34M"/>
    <property type="match status" value="1"/>
</dbReference>
<dbReference type="PANTHER" id="PTHR14503">
    <property type="entry name" value="MITOCHONDRIAL RIBOSOMAL PROTEIN 34 FAMILY MEMBER"/>
    <property type="match status" value="1"/>
</dbReference>
<dbReference type="Pfam" id="PF00468">
    <property type="entry name" value="Ribosomal_L34"/>
    <property type="match status" value="1"/>
</dbReference>
<dbReference type="PROSITE" id="PS00784">
    <property type="entry name" value="RIBOSOMAL_L34"/>
    <property type="match status" value="1"/>
</dbReference>
<proteinExistence type="inferred from homology"/>
<reference key="1">
    <citation type="submission" date="2006-01" db="EMBL/GenBank/DDBJ databases">
        <title>Complete sequence of Anaeromyxobacter dehalogenans 2CP-C.</title>
        <authorList>
            <person name="Copeland A."/>
            <person name="Lucas S."/>
            <person name="Lapidus A."/>
            <person name="Barry K."/>
            <person name="Detter J.C."/>
            <person name="Glavina T."/>
            <person name="Hammon N."/>
            <person name="Israni S."/>
            <person name="Pitluck S."/>
            <person name="Brettin T."/>
            <person name="Bruce D."/>
            <person name="Han C."/>
            <person name="Tapia R."/>
            <person name="Gilna P."/>
            <person name="Kiss H."/>
            <person name="Schmutz J."/>
            <person name="Larimer F."/>
            <person name="Land M."/>
            <person name="Kyrpides N."/>
            <person name="Anderson I."/>
            <person name="Sanford R.A."/>
            <person name="Ritalahti K.M."/>
            <person name="Thomas H.S."/>
            <person name="Kirby J.R."/>
            <person name="Zhulin I.B."/>
            <person name="Loeffler F.E."/>
            <person name="Richardson P."/>
        </authorList>
    </citation>
    <scope>NUCLEOTIDE SEQUENCE [LARGE SCALE GENOMIC DNA]</scope>
    <source>
        <strain>2CP-C</strain>
    </source>
</reference>
<accession>Q2IHR4</accession>
<name>RL34_ANADE</name>
<protein>
    <recommendedName>
        <fullName evidence="1">Large ribosomal subunit protein bL34</fullName>
    </recommendedName>
    <alternativeName>
        <fullName evidence="3">50S ribosomal protein L34</fullName>
    </alternativeName>
</protein>
<evidence type="ECO:0000255" key="1">
    <source>
        <dbReference type="HAMAP-Rule" id="MF_00391"/>
    </source>
</evidence>
<evidence type="ECO:0000256" key="2">
    <source>
        <dbReference type="SAM" id="MobiDB-lite"/>
    </source>
</evidence>
<evidence type="ECO:0000305" key="3"/>
<keyword id="KW-1185">Reference proteome</keyword>
<keyword id="KW-0687">Ribonucleoprotein</keyword>
<keyword id="KW-0689">Ribosomal protein</keyword>
<gene>
    <name evidence="1" type="primary">rpmH</name>
    <name type="ordered locus">Adeh_4361</name>
</gene>
<feature type="chain" id="PRO_1000013270" description="Large ribosomal subunit protein bL34">
    <location>
        <begin position="1"/>
        <end position="49"/>
    </location>
</feature>
<feature type="region of interest" description="Disordered" evidence="2">
    <location>
        <begin position="1"/>
        <end position="49"/>
    </location>
</feature>
<feature type="compositionally biased region" description="Basic residues" evidence="2">
    <location>
        <begin position="1"/>
        <end position="23"/>
    </location>
</feature>
<feature type="compositionally biased region" description="Basic residues" evidence="2">
    <location>
        <begin position="31"/>
        <end position="49"/>
    </location>
</feature>